<sequence>MANYFNTLNLRQQLAQLGKCRFMGRDEFADGASYLQGKKVVIVGCGAQGLNQGLNMRDSGLDISYALRKEAIAEKRASWRKATENGFKVGTYEELIPQADLVVNLTPDKQHSDVVRTVQPLMKDGAALGYSHGFNIVEVGEQIRKDITVVMVAPKCPGTEVREEYKRGFGVPTLIAVHPENDPKGEGMAIAKAWAAATGGHRAGVLESSFVAEVKSDLMGEQTILCGMLQAGSLLCFDKLVEEGTDPAYAEKLIQFGWETITEALKQGGITLMMDRLSNPAKLRAYALSEQLKEIMAPLFQKHMDDIISGEFSSGMMADWANDDKKLLTWREETGKTAFETAPQYEGKIGEQEYFDKGVLMIAMVKAGVELAFETMVDSGIIEESAYYESLHELPLIANTIARKRLYEMNVVISDTAEYGNYLFSYACVPLLKPFMAELQPGDLGKAIPEGAVDNAQLRDVNEAIRCHAIEQVGKKLRGYMTDMKRIAVAG</sequence>
<organism>
    <name type="scientific">Escherichia coli O8 (strain IAI1)</name>
    <dbReference type="NCBI Taxonomy" id="585034"/>
    <lineage>
        <taxon>Bacteria</taxon>
        <taxon>Pseudomonadati</taxon>
        <taxon>Pseudomonadota</taxon>
        <taxon>Gammaproteobacteria</taxon>
        <taxon>Enterobacterales</taxon>
        <taxon>Enterobacteriaceae</taxon>
        <taxon>Escherichia</taxon>
    </lineage>
</organism>
<protein>
    <recommendedName>
        <fullName evidence="1">Ketol-acid reductoisomerase (NADP(+))</fullName>
        <shortName evidence="1">KARI</shortName>
        <ecNumber evidence="1">1.1.1.86</ecNumber>
    </recommendedName>
    <alternativeName>
        <fullName evidence="1">Acetohydroxy-acid isomeroreductase</fullName>
        <shortName evidence="1">AHIR</shortName>
    </alternativeName>
    <alternativeName>
        <fullName evidence="1">Alpha-keto-beta-hydroxylacyl reductoisomerase</fullName>
    </alternativeName>
    <alternativeName>
        <fullName evidence="1">Ketol-acid reductoisomerase type 2</fullName>
    </alternativeName>
    <alternativeName>
        <fullName evidence="1">Ketol-acid reductoisomerase type II</fullName>
    </alternativeName>
</protein>
<evidence type="ECO:0000255" key="1">
    <source>
        <dbReference type="HAMAP-Rule" id="MF_00435"/>
    </source>
</evidence>
<evidence type="ECO:0000255" key="2">
    <source>
        <dbReference type="PROSITE-ProRule" id="PRU01197"/>
    </source>
</evidence>
<evidence type="ECO:0000255" key="3">
    <source>
        <dbReference type="PROSITE-ProRule" id="PRU01198"/>
    </source>
</evidence>
<reference key="1">
    <citation type="journal article" date="2009" name="PLoS Genet.">
        <title>Organised genome dynamics in the Escherichia coli species results in highly diverse adaptive paths.</title>
        <authorList>
            <person name="Touchon M."/>
            <person name="Hoede C."/>
            <person name="Tenaillon O."/>
            <person name="Barbe V."/>
            <person name="Baeriswyl S."/>
            <person name="Bidet P."/>
            <person name="Bingen E."/>
            <person name="Bonacorsi S."/>
            <person name="Bouchier C."/>
            <person name="Bouvet O."/>
            <person name="Calteau A."/>
            <person name="Chiapello H."/>
            <person name="Clermont O."/>
            <person name="Cruveiller S."/>
            <person name="Danchin A."/>
            <person name="Diard M."/>
            <person name="Dossat C."/>
            <person name="Karoui M.E."/>
            <person name="Frapy E."/>
            <person name="Garry L."/>
            <person name="Ghigo J.M."/>
            <person name="Gilles A.M."/>
            <person name="Johnson J."/>
            <person name="Le Bouguenec C."/>
            <person name="Lescat M."/>
            <person name="Mangenot S."/>
            <person name="Martinez-Jehanne V."/>
            <person name="Matic I."/>
            <person name="Nassif X."/>
            <person name="Oztas S."/>
            <person name="Petit M.A."/>
            <person name="Pichon C."/>
            <person name="Rouy Z."/>
            <person name="Ruf C.S."/>
            <person name="Schneider D."/>
            <person name="Tourret J."/>
            <person name="Vacherie B."/>
            <person name="Vallenet D."/>
            <person name="Medigue C."/>
            <person name="Rocha E.P.C."/>
            <person name="Denamur E."/>
        </authorList>
    </citation>
    <scope>NUCLEOTIDE SEQUENCE [LARGE SCALE GENOMIC DNA]</scope>
    <source>
        <strain>IAI1</strain>
    </source>
</reference>
<comment type="function">
    <text evidence="1">Involved in the biosynthesis of branched-chain amino acids (BCAA). Catalyzes an alkyl-migration followed by a ketol-acid reduction of (S)-2-acetolactate (S2AL) to yield (R)-2,3-dihydroxy-isovalerate. In the isomerase reaction, S2AL is rearranged via a Mg-dependent methyl migration to produce 3-hydroxy-3-methyl-2-ketobutyrate (HMKB). In the reductase reaction, this 2-ketoacid undergoes a metal-dependent reduction by NADPH to yield (R)-2,3-dihydroxy-isovalerate.</text>
</comment>
<comment type="catalytic activity">
    <reaction evidence="1">
        <text>(2R)-2,3-dihydroxy-3-methylbutanoate + NADP(+) = (2S)-2-acetolactate + NADPH + H(+)</text>
        <dbReference type="Rhea" id="RHEA:22068"/>
        <dbReference type="ChEBI" id="CHEBI:15378"/>
        <dbReference type="ChEBI" id="CHEBI:49072"/>
        <dbReference type="ChEBI" id="CHEBI:57783"/>
        <dbReference type="ChEBI" id="CHEBI:58349"/>
        <dbReference type="ChEBI" id="CHEBI:58476"/>
        <dbReference type="EC" id="1.1.1.86"/>
    </reaction>
</comment>
<comment type="catalytic activity">
    <reaction evidence="1">
        <text>(2R,3R)-2,3-dihydroxy-3-methylpentanoate + NADP(+) = (S)-2-ethyl-2-hydroxy-3-oxobutanoate + NADPH + H(+)</text>
        <dbReference type="Rhea" id="RHEA:13493"/>
        <dbReference type="ChEBI" id="CHEBI:15378"/>
        <dbReference type="ChEBI" id="CHEBI:49256"/>
        <dbReference type="ChEBI" id="CHEBI:49258"/>
        <dbReference type="ChEBI" id="CHEBI:57783"/>
        <dbReference type="ChEBI" id="CHEBI:58349"/>
        <dbReference type="EC" id="1.1.1.86"/>
    </reaction>
</comment>
<comment type="cofactor">
    <cofactor evidence="1">
        <name>Mg(2+)</name>
        <dbReference type="ChEBI" id="CHEBI:18420"/>
    </cofactor>
    <text evidence="1">Binds 2 magnesium ions per subunit.</text>
</comment>
<comment type="pathway">
    <text evidence="1">Amino-acid biosynthesis; L-isoleucine biosynthesis; L-isoleucine from 2-oxobutanoate: step 2/4.</text>
</comment>
<comment type="pathway">
    <text evidence="1">Amino-acid biosynthesis; L-valine biosynthesis; L-valine from pyruvate: step 2/4.</text>
</comment>
<comment type="similarity">
    <text evidence="1">Belongs to the ketol-acid reductoisomerase family.</text>
</comment>
<gene>
    <name evidence="1" type="primary">ilvC</name>
    <name type="ordered locus">ECIAI1_3961</name>
</gene>
<feature type="chain" id="PRO_1000190962" description="Ketol-acid reductoisomerase (NADP(+))">
    <location>
        <begin position="1"/>
        <end position="491"/>
    </location>
</feature>
<feature type="domain" description="KARI N-terminal Rossmann" evidence="2">
    <location>
        <begin position="15"/>
        <end position="208"/>
    </location>
</feature>
<feature type="domain" description="KARI C-terminal knotted 1" evidence="3">
    <location>
        <begin position="209"/>
        <end position="344"/>
    </location>
</feature>
<feature type="domain" description="KARI C-terminal knotted 2" evidence="3">
    <location>
        <begin position="345"/>
        <end position="484"/>
    </location>
</feature>
<feature type="active site" evidence="1">
    <location>
        <position position="132"/>
    </location>
</feature>
<feature type="binding site" evidence="1">
    <location>
        <begin position="45"/>
        <end position="48"/>
    </location>
    <ligand>
        <name>NADP(+)</name>
        <dbReference type="ChEBI" id="CHEBI:58349"/>
    </ligand>
</feature>
<feature type="binding site" evidence="1">
    <location>
        <position position="68"/>
    </location>
    <ligand>
        <name>NADP(+)</name>
        <dbReference type="ChEBI" id="CHEBI:58349"/>
    </ligand>
</feature>
<feature type="binding site" evidence="1">
    <location>
        <position position="76"/>
    </location>
    <ligand>
        <name>NADP(+)</name>
        <dbReference type="ChEBI" id="CHEBI:58349"/>
    </ligand>
</feature>
<feature type="binding site" evidence="1">
    <location>
        <position position="78"/>
    </location>
    <ligand>
        <name>NADP(+)</name>
        <dbReference type="ChEBI" id="CHEBI:58349"/>
    </ligand>
</feature>
<feature type="binding site" evidence="1">
    <location>
        <begin position="108"/>
        <end position="110"/>
    </location>
    <ligand>
        <name>NADP(+)</name>
        <dbReference type="ChEBI" id="CHEBI:58349"/>
    </ligand>
</feature>
<feature type="binding site" evidence="1">
    <location>
        <position position="158"/>
    </location>
    <ligand>
        <name>NADP(+)</name>
        <dbReference type="ChEBI" id="CHEBI:58349"/>
    </ligand>
</feature>
<feature type="binding site" evidence="1">
    <location>
        <position position="217"/>
    </location>
    <ligand>
        <name>Mg(2+)</name>
        <dbReference type="ChEBI" id="CHEBI:18420"/>
        <label>1</label>
    </ligand>
</feature>
<feature type="binding site" evidence="1">
    <location>
        <position position="217"/>
    </location>
    <ligand>
        <name>Mg(2+)</name>
        <dbReference type="ChEBI" id="CHEBI:18420"/>
        <label>2</label>
    </ligand>
</feature>
<feature type="binding site" evidence="1">
    <location>
        <position position="221"/>
    </location>
    <ligand>
        <name>Mg(2+)</name>
        <dbReference type="ChEBI" id="CHEBI:18420"/>
        <label>1</label>
    </ligand>
</feature>
<feature type="binding site" evidence="1">
    <location>
        <position position="389"/>
    </location>
    <ligand>
        <name>Mg(2+)</name>
        <dbReference type="ChEBI" id="CHEBI:18420"/>
        <label>2</label>
    </ligand>
</feature>
<feature type="binding site" evidence="1">
    <location>
        <position position="393"/>
    </location>
    <ligand>
        <name>Mg(2+)</name>
        <dbReference type="ChEBI" id="CHEBI:18420"/>
        <label>2</label>
    </ligand>
</feature>
<feature type="binding site" evidence="1">
    <location>
        <position position="414"/>
    </location>
    <ligand>
        <name>substrate</name>
    </ligand>
</feature>
<name>ILVC_ECO8A</name>
<dbReference type="EC" id="1.1.1.86" evidence="1"/>
<dbReference type="EMBL" id="CU928160">
    <property type="protein sequence ID" value="CAR00746.1"/>
    <property type="molecule type" value="Genomic_DNA"/>
</dbReference>
<dbReference type="RefSeq" id="WP_001295253.1">
    <property type="nucleotide sequence ID" value="NC_011741.1"/>
</dbReference>
<dbReference type="SMR" id="B7M5C2"/>
<dbReference type="GeneID" id="93778171"/>
<dbReference type="KEGG" id="ecr:ECIAI1_3961"/>
<dbReference type="HOGENOM" id="CLU_551905_0_0_6"/>
<dbReference type="UniPathway" id="UPA00047">
    <property type="reaction ID" value="UER00056"/>
</dbReference>
<dbReference type="UniPathway" id="UPA00049">
    <property type="reaction ID" value="UER00060"/>
</dbReference>
<dbReference type="GO" id="GO:0005829">
    <property type="term" value="C:cytosol"/>
    <property type="evidence" value="ECO:0007669"/>
    <property type="project" value="TreeGrafter"/>
</dbReference>
<dbReference type="GO" id="GO:0004455">
    <property type="term" value="F:ketol-acid reductoisomerase activity"/>
    <property type="evidence" value="ECO:0007669"/>
    <property type="project" value="UniProtKB-UniRule"/>
</dbReference>
<dbReference type="GO" id="GO:0000287">
    <property type="term" value="F:magnesium ion binding"/>
    <property type="evidence" value="ECO:0007669"/>
    <property type="project" value="UniProtKB-UniRule"/>
</dbReference>
<dbReference type="GO" id="GO:0009097">
    <property type="term" value="P:isoleucine biosynthetic process"/>
    <property type="evidence" value="ECO:0007669"/>
    <property type="project" value="UniProtKB-UniRule"/>
</dbReference>
<dbReference type="GO" id="GO:0009099">
    <property type="term" value="P:L-valine biosynthetic process"/>
    <property type="evidence" value="ECO:0007669"/>
    <property type="project" value="UniProtKB-UniRule"/>
</dbReference>
<dbReference type="FunFam" id="1.10.1040.10:FF:000007">
    <property type="entry name" value="Ketol-acid reductoisomerase (NADP(+))"/>
    <property type="match status" value="1"/>
</dbReference>
<dbReference type="FunFam" id="3.40.50.720:FF:000043">
    <property type="entry name" value="Ketol-acid reductoisomerase (NADP(+))"/>
    <property type="match status" value="1"/>
</dbReference>
<dbReference type="Gene3D" id="1.10.1040.10">
    <property type="entry name" value="N-(1-d-carboxylethyl)-l-norvaline Dehydrogenase, domain 2"/>
    <property type="match status" value="1"/>
</dbReference>
<dbReference type="Gene3D" id="3.40.50.720">
    <property type="entry name" value="NAD(P)-binding Rossmann-like Domain"/>
    <property type="match status" value="1"/>
</dbReference>
<dbReference type="HAMAP" id="MF_00435">
    <property type="entry name" value="IlvC"/>
    <property type="match status" value="1"/>
</dbReference>
<dbReference type="InterPro" id="IPR008927">
    <property type="entry name" value="6-PGluconate_DH-like_C_sf"/>
</dbReference>
<dbReference type="InterPro" id="IPR013328">
    <property type="entry name" value="6PGD_dom2"/>
</dbReference>
<dbReference type="InterPro" id="IPR013023">
    <property type="entry name" value="KARI"/>
</dbReference>
<dbReference type="InterPro" id="IPR000506">
    <property type="entry name" value="KARI_C"/>
</dbReference>
<dbReference type="InterPro" id="IPR013116">
    <property type="entry name" value="KARI_N"/>
</dbReference>
<dbReference type="InterPro" id="IPR036291">
    <property type="entry name" value="NAD(P)-bd_dom_sf"/>
</dbReference>
<dbReference type="NCBIfam" id="TIGR00465">
    <property type="entry name" value="ilvC"/>
    <property type="match status" value="1"/>
</dbReference>
<dbReference type="NCBIfam" id="NF003557">
    <property type="entry name" value="PRK05225.1"/>
    <property type="match status" value="1"/>
</dbReference>
<dbReference type="PANTHER" id="PTHR21371">
    <property type="entry name" value="KETOL-ACID REDUCTOISOMERASE, MITOCHONDRIAL"/>
    <property type="match status" value="1"/>
</dbReference>
<dbReference type="PANTHER" id="PTHR21371:SF1">
    <property type="entry name" value="KETOL-ACID REDUCTOISOMERASE, MITOCHONDRIAL"/>
    <property type="match status" value="1"/>
</dbReference>
<dbReference type="Pfam" id="PF01450">
    <property type="entry name" value="KARI_C"/>
    <property type="match status" value="2"/>
</dbReference>
<dbReference type="Pfam" id="PF07991">
    <property type="entry name" value="KARI_N"/>
    <property type="match status" value="1"/>
</dbReference>
<dbReference type="SUPFAM" id="SSF48179">
    <property type="entry name" value="6-phosphogluconate dehydrogenase C-terminal domain-like"/>
    <property type="match status" value="2"/>
</dbReference>
<dbReference type="SUPFAM" id="SSF51735">
    <property type="entry name" value="NAD(P)-binding Rossmann-fold domains"/>
    <property type="match status" value="1"/>
</dbReference>
<dbReference type="PROSITE" id="PS51851">
    <property type="entry name" value="KARI_C"/>
    <property type="match status" value="2"/>
</dbReference>
<dbReference type="PROSITE" id="PS51850">
    <property type="entry name" value="KARI_N"/>
    <property type="match status" value="1"/>
</dbReference>
<keyword id="KW-0028">Amino-acid biosynthesis</keyword>
<keyword id="KW-0100">Branched-chain amino acid biosynthesis</keyword>
<keyword id="KW-0460">Magnesium</keyword>
<keyword id="KW-0479">Metal-binding</keyword>
<keyword id="KW-0521">NADP</keyword>
<keyword id="KW-0560">Oxidoreductase</keyword>
<keyword id="KW-0677">Repeat</keyword>
<accession>B7M5C2</accession>
<proteinExistence type="inferred from homology"/>